<reference key="1">
    <citation type="journal article" date="2009" name="Appl. Environ. Microbiol.">
        <title>Genome analysis of the meat starter culture bacterium Staphylococcus carnosus TM300.</title>
        <authorList>
            <person name="Rosenstein R."/>
            <person name="Nerz C."/>
            <person name="Biswas L."/>
            <person name="Resch A."/>
            <person name="Raddatz G."/>
            <person name="Schuster S.C."/>
            <person name="Goetz F."/>
        </authorList>
    </citation>
    <scope>NUCLEOTIDE SEQUENCE [LARGE SCALE GENOMIC DNA]</scope>
    <source>
        <strain>TM300</strain>
    </source>
</reference>
<feature type="chain" id="PRO_1000164453" description="Xanthine phosphoribosyltransferase">
    <location>
        <begin position="1"/>
        <end position="192"/>
    </location>
</feature>
<feature type="binding site" evidence="1">
    <location>
        <position position="20"/>
    </location>
    <ligand>
        <name>xanthine</name>
        <dbReference type="ChEBI" id="CHEBI:17712"/>
    </ligand>
</feature>
<feature type="binding site" evidence="1">
    <location>
        <position position="27"/>
    </location>
    <ligand>
        <name>xanthine</name>
        <dbReference type="ChEBI" id="CHEBI:17712"/>
    </ligand>
</feature>
<feature type="binding site" evidence="1">
    <location>
        <begin position="128"/>
        <end position="132"/>
    </location>
    <ligand>
        <name>5-phospho-alpha-D-ribose 1-diphosphate</name>
        <dbReference type="ChEBI" id="CHEBI:58017"/>
    </ligand>
</feature>
<feature type="binding site" evidence="1">
    <location>
        <position position="156"/>
    </location>
    <ligand>
        <name>xanthine</name>
        <dbReference type="ChEBI" id="CHEBI:17712"/>
    </ligand>
</feature>
<sequence length="192" mass="21122">MEALRQKVKEDGVVIGEKILKVDGFLNHQIDAQLMYDIGETFYEQFKDQKVTKILTVEASGIAPAIMVAYKFGVPCLFAKKAKPNTLNKGFYQTDIHSFTKDKTNSVIISEEFLDEHDRVLIIDDFLANGDASLGLNRLVHQAGAETVGVGIVVEKSFQQGRTRLEEAGLKVSSLCEVASLSGNKVTLVGEE</sequence>
<keyword id="KW-0963">Cytoplasm</keyword>
<keyword id="KW-0328">Glycosyltransferase</keyword>
<keyword id="KW-0660">Purine salvage</keyword>
<keyword id="KW-1185">Reference proteome</keyword>
<keyword id="KW-0808">Transferase</keyword>
<dbReference type="EC" id="2.4.2.22" evidence="1"/>
<dbReference type="EMBL" id="AM295250">
    <property type="protein sequence ID" value="CAL26962.1"/>
    <property type="molecule type" value="Genomic_DNA"/>
</dbReference>
<dbReference type="RefSeq" id="WP_012664077.1">
    <property type="nucleotide sequence ID" value="NC_012121.1"/>
</dbReference>
<dbReference type="SMR" id="B9DM01"/>
<dbReference type="GeneID" id="93794960"/>
<dbReference type="KEGG" id="sca:SCA_0047"/>
<dbReference type="eggNOG" id="COG0503">
    <property type="taxonomic scope" value="Bacteria"/>
</dbReference>
<dbReference type="HOGENOM" id="CLU_099015_0_0_9"/>
<dbReference type="OrthoDB" id="9790678at2"/>
<dbReference type="BioCyc" id="SCAR396513:SCA_RS00225-MONOMER"/>
<dbReference type="UniPathway" id="UPA00602">
    <property type="reaction ID" value="UER00658"/>
</dbReference>
<dbReference type="Proteomes" id="UP000000444">
    <property type="component" value="Chromosome"/>
</dbReference>
<dbReference type="GO" id="GO:0005737">
    <property type="term" value="C:cytoplasm"/>
    <property type="evidence" value="ECO:0007669"/>
    <property type="project" value="UniProtKB-SubCell"/>
</dbReference>
<dbReference type="GO" id="GO:0000310">
    <property type="term" value="F:xanthine phosphoribosyltransferase activity"/>
    <property type="evidence" value="ECO:0007669"/>
    <property type="project" value="UniProtKB-UniRule"/>
</dbReference>
<dbReference type="GO" id="GO:0006166">
    <property type="term" value="P:purine ribonucleoside salvage"/>
    <property type="evidence" value="ECO:0007669"/>
    <property type="project" value="UniProtKB-KW"/>
</dbReference>
<dbReference type="GO" id="GO:0046110">
    <property type="term" value="P:xanthine metabolic process"/>
    <property type="evidence" value="ECO:0007669"/>
    <property type="project" value="InterPro"/>
</dbReference>
<dbReference type="GO" id="GO:0032265">
    <property type="term" value="P:XMP salvage"/>
    <property type="evidence" value="ECO:0007669"/>
    <property type="project" value="UniProtKB-UniRule"/>
</dbReference>
<dbReference type="CDD" id="cd06223">
    <property type="entry name" value="PRTases_typeI"/>
    <property type="match status" value="1"/>
</dbReference>
<dbReference type="Gene3D" id="3.40.50.2020">
    <property type="match status" value="1"/>
</dbReference>
<dbReference type="HAMAP" id="MF_01184">
    <property type="entry name" value="XPRTase"/>
    <property type="match status" value="1"/>
</dbReference>
<dbReference type="InterPro" id="IPR000836">
    <property type="entry name" value="PRibTrfase_dom"/>
</dbReference>
<dbReference type="InterPro" id="IPR029057">
    <property type="entry name" value="PRTase-like"/>
</dbReference>
<dbReference type="InterPro" id="IPR050118">
    <property type="entry name" value="Pur/Pyrimidine_PRTase"/>
</dbReference>
<dbReference type="InterPro" id="IPR010079">
    <property type="entry name" value="Xanthine_PRibTrfase"/>
</dbReference>
<dbReference type="NCBIfam" id="NF006671">
    <property type="entry name" value="PRK09219.1"/>
    <property type="match status" value="1"/>
</dbReference>
<dbReference type="NCBIfam" id="TIGR01744">
    <property type="entry name" value="XPRTase"/>
    <property type="match status" value="1"/>
</dbReference>
<dbReference type="PANTHER" id="PTHR43864">
    <property type="entry name" value="HYPOXANTHINE/GUANINE PHOSPHORIBOSYLTRANSFERASE"/>
    <property type="match status" value="1"/>
</dbReference>
<dbReference type="PANTHER" id="PTHR43864:SF1">
    <property type="entry name" value="XANTHINE PHOSPHORIBOSYLTRANSFERASE"/>
    <property type="match status" value="1"/>
</dbReference>
<dbReference type="Pfam" id="PF00156">
    <property type="entry name" value="Pribosyltran"/>
    <property type="match status" value="1"/>
</dbReference>
<dbReference type="SUPFAM" id="SSF53271">
    <property type="entry name" value="PRTase-like"/>
    <property type="match status" value="1"/>
</dbReference>
<organism>
    <name type="scientific">Staphylococcus carnosus (strain TM300)</name>
    <dbReference type="NCBI Taxonomy" id="396513"/>
    <lineage>
        <taxon>Bacteria</taxon>
        <taxon>Bacillati</taxon>
        <taxon>Bacillota</taxon>
        <taxon>Bacilli</taxon>
        <taxon>Bacillales</taxon>
        <taxon>Staphylococcaceae</taxon>
        <taxon>Staphylococcus</taxon>
    </lineage>
</organism>
<evidence type="ECO:0000255" key="1">
    <source>
        <dbReference type="HAMAP-Rule" id="MF_01184"/>
    </source>
</evidence>
<proteinExistence type="inferred from homology"/>
<gene>
    <name evidence="1" type="primary">xpt</name>
    <name type="ordered locus">Sca_0047</name>
</gene>
<name>XPT_STACT</name>
<accession>B9DM01</accession>
<protein>
    <recommendedName>
        <fullName evidence="1">Xanthine phosphoribosyltransferase</fullName>
        <shortName evidence="1">XPRTase</shortName>
        <ecNumber evidence="1">2.4.2.22</ecNumber>
    </recommendedName>
</protein>
<comment type="function">
    <text evidence="1">Converts the preformed base xanthine, a product of nucleic acid breakdown, to xanthosine 5'-monophosphate (XMP), so it can be reused for RNA or DNA synthesis.</text>
</comment>
<comment type="catalytic activity">
    <reaction evidence="1">
        <text>XMP + diphosphate = xanthine + 5-phospho-alpha-D-ribose 1-diphosphate</text>
        <dbReference type="Rhea" id="RHEA:10800"/>
        <dbReference type="ChEBI" id="CHEBI:17712"/>
        <dbReference type="ChEBI" id="CHEBI:33019"/>
        <dbReference type="ChEBI" id="CHEBI:57464"/>
        <dbReference type="ChEBI" id="CHEBI:58017"/>
        <dbReference type="EC" id="2.4.2.22"/>
    </reaction>
</comment>
<comment type="pathway">
    <text evidence="1">Purine metabolism; XMP biosynthesis via salvage pathway; XMP from xanthine: step 1/1.</text>
</comment>
<comment type="subunit">
    <text evidence="1">Homodimer.</text>
</comment>
<comment type="subcellular location">
    <subcellularLocation>
        <location evidence="1">Cytoplasm</location>
    </subcellularLocation>
</comment>
<comment type="similarity">
    <text evidence="1">Belongs to the purine/pyrimidine phosphoribosyltransferase family. Xpt subfamily.</text>
</comment>